<protein>
    <recommendedName>
        <fullName evidence="7">Phylloseptin-H8</fullName>
        <shortName evidence="7">PLS-H8</shortName>
    </recommendedName>
    <alternativeName>
        <fullName evidence="6 8 10">Phylloseptin-10</fullName>
        <shortName evidence="6 8 10">PS-10</shortName>
    </alternativeName>
</protein>
<proteinExistence type="evidence at protein level"/>
<keyword id="KW-0027">Amidation</keyword>
<keyword id="KW-0878">Amphibian defense peptide</keyword>
<keyword id="KW-0929">Antimicrobial</keyword>
<keyword id="KW-0165">Cleavage on pair of basic residues</keyword>
<keyword id="KW-0903">Direct protein sequencing</keyword>
<keyword id="KW-0964">Secreted</keyword>
<keyword id="KW-0732">Signal</keyword>
<dbReference type="EMBL" id="AM229013">
    <property type="protein sequence ID" value="CAJ76137.1"/>
    <property type="molecule type" value="mRNA"/>
</dbReference>
<dbReference type="GO" id="GO:0005576">
    <property type="term" value="C:extracellular region"/>
    <property type="evidence" value="ECO:0007669"/>
    <property type="project" value="UniProtKB-SubCell"/>
</dbReference>
<dbReference type="GO" id="GO:0006952">
    <property type="term" value="P:defense response"/>
    <property type="evidence" value="ECO:0007669"/>
    <property type="project" value="UniProtKB-KW"/>
</dbReference>
<dbReference type="InterPro" id="IPR004275">
    <property type="entry name" value="Frog_antimicrobial_propeptide"/>
</dbReference>
<dbReference type="InterPro" id="IPR016322">
    <property type="entry name" value="FSAP"/>
</dbReference>
<dbReference type="Pfam" id="PF03032">
    <property type="entry name" value="FSAP_sig_propep"/>
    <property type="match status" value="1"/>
</dbReference>
<dbReference type="PIRSF" id="PIRSF001822">
    <property type="entry name" value="Dermaseptin_precursor"/>
    <property type="match status" value="1"/>
</dbReference>
<reference evidence="9 10" key="1">
    <citation type="journal article" date="2006" name="Peptides">
        <title>Elements of the granular gland peptidome and transcriptome persist in air-dried skin of the South American orange-legged leaf frog, Phyllomedusa hypocondrialis.</title>
        <authorList>
            <person name="Chen T."/>
            <person name="Zhou M."/>
            <person name="Gagliardo R."/>
            <person name="Walker B."/>
            <person name="Shaw C."/>
        </authorList>
    </citation>
    <scope>NUCLEOTIDE SEQUENCE [MRNA]</scope>
    <scope>PROTEIN SEQUENCE OF 47-65</scope>
    <scope>SUBCELLULAR LOCATION</scope>
    <scope>TISSUE SPECIFICITY</scope>
    <scope>MASS SPECTROMETRY</scope>
    <scope>AMIDATION AT LEU-65</scope>
    <source>
        <tissue evidence="10">Skin</tissue>
        <tissue evidence="4">Skin secretion</tissue>
    </source>
</reference>
<reference evidence="9" key="2">
    <citation type="submission" date="2006-07" db="UniProtKB">
        <title>High-throughput co-localization of peptides and proteins by imaging mass spectrometry.</title>
        <authorList>
            <person name="Silva L.P."/>
            <person name="Brand G.D."/>
            <person name="Bloch C. Jr."/>
        </authorList>
    </citation>
    <scope>PROTEIN SEQUENCE OF 47-65</scope>
    <scope>SUBCELLULAR LOCATION</scope>
    <scope>TISSUE SPECIFICITY</scope>
    <scope>MASS SPECTROMETRY</scope>
    <scope>AMIDATION AT LEU-65</scope>
    <source>
        <tissue evidence="5">Skin secretion</tissue>
    </source>
</reference>
<reference key="3">
    <citation type="journal article" date="2008" name="Peptides">
        <title>A consistent nomenclature of antimicrobial peptides isolated from frogs of the subfamily Phyllomedusinae.</title>
        <authorList>
            <person name="Amiche M."/>
            <person name="Ladram A."/>
            <person name="Nicolas P."/>
        </authorList>
    </citation>
    <scope>NOMENCLATURE</scope>
</reference>
<accession>Q0VZ39</accession>
<accession>P84906</accession>
<sequence length="66" mass="7476">MAFLKKSLFLVLFLGLVSLSICEEEKRETEEEENDQEEDDKSEEKRFLSLLPSLVSGAVSLVKKLG</sequence>
<gene>
    <name evidence="10" type="primary">psn-10</name>
</gene>
<comment type="function">
    <text evidence="1">Has antimicrobial activity.</text>
</comment>
<comment type="subcellular location">
    <subcellularLocation>
        <location evidence="4 5">Secreted</location>
    </subcellularLocation>
</comment>
<comment type="tissue specificity">
    <text evidence="4 5">Expressed by the skin glands.</text>
</comment>
<comment type="mass spectrometry" mass="1970.43" error="0.1" method="MALDI" evidence="4 5"/>
<comment type="mass spectrometry" mass="1970.95" method="MALDI" evidence="4 5"/>
<comment type="similarity">
    <text evidence="2">Belongs to the frog skin active peptide (FSAP) family. Phylloseptin subfamily.</text>
</comment>
<comment type="online information" name="The antimicrobial peptide database">
    <link uri="https://wangapd3.com/database/query_output.php?ID=00975"/>
</comment>
<evidence type="ECO:0000250" key="1">
    <source>
        <dbReference type="UniProtKB" id="Q17UY9"/>
    </source>
</evidence>
<evidence type="ECO:0000255" key="2"/>
<evidence type="ECO:0000256" key="3">
    <source>
        <dbReference type="SAM" id="MobiDB-lite"/>
    </source>
</evidence>
<evidence type="ECO:0000269" key="4">
    <source>
    </source>
</evidence>
<evidence type="ECO:0000269" key="5">
    <source ref="2"/>
</evidence>
<evidence type="ECO:0000303" key="6">
    <source>
    </source>
</evidence>
<evidence type="ECO:0000303" key="7">
    <source>
    </source>
</evidence>
<evidence type="ECO:0000303" key="8">
    <source ref="2"/>
</evidence>
<evidence type="ECO:0000305" key="9"/>
<evidence type="ECO:0000312" key="10">
    <source>
        <dbReference type="EMBL" id="CAJ76137.1"/>
    </source>
</evidence>
<name>PLS8_PITHY</name>
<organism>
    <name type="scientific">Pithecopus hypochondrialis</name>
    <name type="common">Orange-legged leaf frog</name>
    <name type="synonym">Phyllomedusa hypochondrialis</name>
    <dbReference type="NCBI Taxonomy" id="317381"/>
    <lineage>
        <taxon>Eukaryota</taxon>
        <taxon>Metazoa</taxon>
        <taxon>Chordata</taxon>
        <taxon>Craniata</taxon>
        <taxon>Vertebrata</taxon>
        <taxon>Euteleostomi</taxon>
        <taxon>Amphibia</taxon>
        <taxon>Batrachia</taxon>
        <taxon>Anura</taxon>
        <taxon>Neobatrachia</taxon>
        <taxon>Hyloidea</taxon>
        <taxon>Hylidae</taxon>
        <taxon>Phyllomedusinae</taxon>
        <taxon>Pithecopus</taxon>
    </lineage>
</organism>
<feature type="signal peptide" evidence="2">
    <location>
        <begin position="1"/>
        <end position="22"/>
    </location>
</feature>
<feature type="propeptide" id="PRO_0000376042" evidence="4 5">
    <location>
        <begin position="23"/>
        <end position="44"/>
    </location>
</feature>
<feature type="peptide" id="PRO_5000078226" description="Phylloseptin-H8" evidence="4 5">
    <location>
        <begin position="47"/>
        <end position="65"/>
    </location>
</feature>
<feature type="region of interest" description="Disordered" evidence="3">
    <location>
        <begin position="25"/>
        <end position="44"/>
    </location>
</feature>
<feature type="compositionally biased region" description="Acidic residues" evidence="3">
    <location>
        <begin position="30"/>
        <end position="41"/>
    </location>
</feature>
<feature type="modified residue" description="Leucine amide" evidence="4 5">
    <location>
        <position position="65"/>
    </location>
</feature>